<name>POTA_MYCMS</name>
<sequence>MENNILELRNVTKEYDGQVVLKGISFNVKEGEFITLLGPSGCGKTTILKIIGGSQKPNSGEILFEDKNLIPIPINKRQFNTIFQSYALFPHLNVFDNVAFGLTIKKTKKDIIEREVMRQIRQVGLEGYENKKIDELSGGQKQRIAIARALVMKPKVLLLDEPMAALDVKLRKTMQEELKRLQQDIGITFIMVSHDQEEALSMSDRIVVMNQGTIQQIGTPEEIYNEPENAWVANFIGSSNIITDGIFLEDNKIKFDGKVFECIDTNFGENESSIDIIIRPEDIIIKNPNNGFFNAKVIKTTFKGIHWEIVVETSKKRQWIIHTINEYDVDQQVSIKWKPANVHVMWKEVDN</sequence>
<gene>
    <name evidence="1" type="primary">potA</name>
    <name type="ordered locus">MSC_0224</name>
</gene>
<feature type="chain" id="PRO_0000286260" description="Spermidine/putrescine import ATP-binding protein PotA">
    <location>
        <begin position="1"/>
        <end position="351"/>
    </location>
</feature>
<feature type="domain" description="ABC transporter" evidence="1">
    <location>
        <begin position="6"/>
        <end position="236"/>
    </location>
</feature>
<feature type="binding site" evidence="1">
    <location>
        <begin position="38"/>
        <end position="45"/>
    </location>
    <ligand>
        <name>ATP</name>
        <dbReference type="ChEBI" id="CHEBI:30616"/>
    </ligand>
</feature>
<accession>Q6MU19</accession>
<dbReference type="EC" id="7.6.2.11" evidence="1"/>
<dbReference type="EMBL" id="BX293980">
    <property type="protein sequence ID" value="CAE76867.1"/>
    <property type="molecule type" value="Genomic_DNA"/>
</dbReference>
<dbReference type="RefSeq" id="NP_975225.1">
    <property type="nucleotide sequence ID" value="NC_005364.2"/>
</dbReference>
<dbReference type="RefSeq" id="WP_011166424.1">
    <property type="nucleotide sequence ID" value="NC_005364.2"/>
</dbReference>
<dbReference type="SMR" id="Q6MU19"/>
<dbReference type="STRING" id="272632.MSC_0224"/>
<dbReference type="KEGG" id="mmy:MSC_0224"/>
<dbReference type="PATRIC" id="fig|272632.4.peg.238"/>
<dbReference type="eggNOG" id="COG3842">
    <property type="taxonomic scope" value="Bacteria"/>
</dbReference>
<dbReference type="HOGENOM" id="CLU_000604_1_1_14"/>
<dbReference type="Proteomes" id="UP000001016">
    <property type="component" value="Chromosome"/>
</dbReference>
<dbReference type="GO" id="GO:0043190">
    <property type="term" value="C:ATP-binding cassette (ABC) transporter complex"/>
    <property type="evidence" value="ECO:0007669"/>
    <property type="project" value="InterPro"/>
</dbReference>
<dbReference type="GO" id="GO:0015594">
    <property type="term" value="F:ABC-type putrescine transporter activity"/>
    <property type="evidence" value="ECO:0007669"/>
    <property type="project" value="InterPro"/>
</dbReference>
<dbReference type="GO" id="GO:0005524">
    <property type="term" value="F:ATP binding"/>
    <property type="evidence" value="ECO:0007669"/>
    <property type="project" value="UniProtKB-KW"/>
</dbReference>
<dbReference type="GO" id="GO:0016887">
    <property type="term" value="F:ATP hydrolysis activity"/>
    <property type="evidence" value="ECO:0007669"/>
    <property type="project" value="InterPro"/>
</dbReference>
<dbReference type="CDD" id="cd03300">
    <property type="entry name" value="ABC_PotA_N"/>
    <property type="match status" value="1"/>
</dbReference>
<dbReference type="FunFam" id="3.40.50.300:FF:000133">
    <property type="entry name" value="Spermidine/putrescine import ATP-binding protein PotA"/>
    <property type="match status" value="1"/>
</dbReference>
<dbReference type="Gene3D" id="2.40.50.100">
    <property type="match status" value="1"/>
</dbReference>
<dbReference type="Gene3D" id="3.40.50.300">
    <property type="entry name" value="P-loop containing nucleotide triphosphate hydrolases"/>
    <property type="match status" value="1"/>
</dbReference>
<dbReference type="InterPro" id="IPR003593">
    <property type="entry name" value="AAA+_ATPase"/>
</dbReference>
<dbReference type="InterPro" id="IPR050093">
    <property type="entry name" value="ABC_SmlMolc_Importer"/>
</dbReference>
<dbReference type="InterPro" id="IPR003439">
    <property type="entry name" value="ABC_transporter-like_ATP-bd"/>
</dbReference>
<dbReference type="InterPro" id="IPR017871">
    <property type="entry name" value="ABC_transporter-like_CS"/>
</dbReference>
<dbReference type="InterPro" id="IPR008995">
    <property type="entry name" value="Mo/tungstate-bd_C_term_dom"/>
</dbReference>
<dbReference type="InterPro" id="IPR027417">
    <property type="entry name" value="P-loop_NTPase"/>
</dbReference>
<dbReference type="InterPro" id="IPR017879">
    <property type="entry name" value="PotA_ATP-bd"/>
</dbReference>
<dbReference type="InterPro" id="IPR013611">
    <property type="entry name" value="Transp-assoc_OB_typ2"/>
</dbReference>
<dbReference type="NCBIfam" id="NF043075">
    <property type="entry name" value="MMSYN1_0197"/>
    <property type="match status" value="1"/>
</dbReference>
<dbReference type="PANTHER" id="PTHR42781">
    <property type="entry name" value="SPERMIDINE/PUTRESCINE IMPORT ATP-BINDING PROTEIN POTA"/>
    <property type="match status" value="1"/>
</dbReference>
<dbReference type="PANTHER" id="PTHR42781:SF4">
    <property type="entry name" value="SPERMIDINE_PUTRESCINE IMPORT ATP-BINDING PROTEIN POTA"/>
    <property type="match status" value="1"/>
</dbReference>
<dbReference type="Pfam" id="PF00005">
    <property type="entry name" value="ABC_tran"/>
    <property type="match status" value="1"/>
</dbReference>
<dbReference type="Pfam" id="PF08402">
    <property type="entry name" value="TOBE_2"/>
    <property type="match status" value="1"/>
</dbReference>
<dbReference type="SMART" id="SM00382">
    <property type="entry name" value="AAA"/>
    <property type="match status" value="1"/>
</dbReference>
<dbReference type="SUPFAM" id="SSF50331">
    <property type="entry name" value="MOP-like"/>
    <property type="match status" value="1"/>
</dbReference>
<dbReference type="SUPFAM" id="SSF52540">
    <property type="entry name" value="P-loop containing nucleoside triphosphate hydrolases"/>
    <property type="match status" value="1"/>
</dbReference>
<dbReference type="PROSITE" id="PS00211">
    <property type="entry name" value="ABC_TRANSPORTER_1"/>
    <property type="match status" value="1"/>
</dbReference>
<dbReference type="PROSITE" id="PS50893">
    <property type="entry name" value="ABC_TRANSPORTER_2"/>
    <property type="match status" value="1"/>
</dbReference>
<dbReference type="PROSITE" id="PS51305">
    <property type="entry name" value="POTA"/>
    <property type="match status" value="1"/>
</dbReference>
<comment type="function">
    <text evidence="1">Part of the ABC transporter complex PotABCD involved in spermidine/putrescine import. Responsible for energy coupling to the transport system.</text>
</comment>
<comment type="catalytic activity">
    <reaction evidence="1">
        <text>ATP + H2O + polyamine-[polyamine-binding protein]Side 1 = ADP + phosphate + polyamineSide 2 + [polyamine-binding protein]Side 1.</text>
        <dbReference type="EC" id="7.6.2.11"/>
    </reaction>
</comment>
<comment type="subunit">
    <text evidence="1">The complex is composed of two ATP-binding proteins (PotA), two transmembrane proteins (PotB and PotC) and a solute-binding protein (PotD).</text>
</comment>
<comment type="subcellular location">
    <subcellularLocation>
        <location evidence="1">Cell membrane</location>
        <topology evidence="1">Peripheral membrane protein</topology>
    </subcellularLocation>
</comment>
<comment type="similarity">
    <text evidence="1">Belongs to the ABC transporter superfamily. Spermidine/putrescine importer (TC 3.A.1.11.1) family.</text>
</comment>
<protein>
    <recommendedName>
        <fullName evidence="1">Spermidine/putrescine import ATP-binding protein PotA</fullName>
        <ecNumber evidence="1">7.6.2.11</ecNumber>
    </recommendedName>
</protein>
<evidence type="ECO:0000255" key="1">
    <source>
        <dbReference type="HAMAP-Rule" id="MF_01726"/>
    </source>
</evidence>
<organism>
    <name type="scientific">Mycoplasma mycoides subsp. mycoides SC (strain CCUG 32753 / NCTC 10114 / PG1)</name>
    <dbReference type="NCBI Taxonomy" id="272632"/>
    <lineage>
        <taxon>Bacteria</taxon>
        <taxon>Bacillati</taxon>
        <taxon>Mycoplasmatota</taxon>
        <taxon>Mollicutes</taxon>
        <taxon>Mycoplasmataceae</taxon>
        <taxon>Mycoplasma</taxon>
    </lineage>
</organism>
<proteinExistence type="inferred from homology"/>
<reference key="1">
    <citation type="journal article" date="2004" name="Genome Res.">
        <title>The genome sequence of Mycoplasma mycoides subsp. mycoides SC type strain PG1T, the causative agent of contagious bovine pleuropneumonia (CBPP).</title>
        <authorList>
            <person name="Westberg J."/>
            <person name="Persson A."/>
            <person name="Holmberg A."/>
            <person name="Goesmann A."/>
            <person name="Lundeberg J."/>
            <person name="Johansson K.-E."/>
            <person name="Pettersson B."/>
            <person name="Uhlen M."/>
        </authorList>
    </citation>
    <scope>NUCLEOTIDE SEQUENCE [LARGE SCALE GENOMIC DNA]</scope>
    <source>
        <strain>CCUG 32753 / NCTC 10114 / PG1</strain>
    </source>
</reference>
<keyword id="KW-0067">ATP-binding</keyword>
<keyword id="KW-1003">Cell membrane</keyword>
<keyword id="KW-0472">Membrane</keyword>
<keyword id="KW-0547">Nucleotide-binding</keyword>
<keyword id="KW-1185">Reference proteome</keyword>
<keyword id="KW-1278">Translocase</keyword>
<keyword id="KW-0813">Transport</keyword>